<keyword id="KW-0227">DNA damage</keyword>
<keyword id="KW-0234">DNA repair</keyword>
<keyword id="KW-0238">DNA-binding</keyword>
<keyword id="KW-0326">Glycosidase</keyword>
<keyword id="KW-0378">Hydrolase</keyword>
<keyword id="KW-0456">Lyase</keyword>
<keyword id="KW-0479">Metal-binding</keyword>
<keyword id="KW-0511">Multifunctional enzyme</keyword>
<keyword id="KW-1185">Reference proteome</keyword>
<keyword id="KW-0862">Zinc</keyword>
<keyword id="KW-0863">Zinc-finger</keyword>
<sequence length="274" mass="30619">MPELPEVETIRRTLLPLIVGKTIEDVRIFWPNIIRHPRDPEAFAARMIGQTVRGLERRGKFLKFLLDRDALISHLRMEGRYAVASALEPLEPHTHVVFCFTDGSELRYRDVRKFGTMHVYAKEEADRRPPLAELGPEPLSPAFSPAVLAERAVKTKRSVKALLLDQTVVAGFGNIYVDESLFRAGILPGRPAASLSSKEIERLHEEMVATIGEAVMKGGSTVRTYVNTQGEAGAFQHSLFVYGRKGEPCKRCGTPIEKTVVAGRGTHYCPRCQR</sequence>
<gene>
    <name evidence="2" type="primary">mutM</name>
    <name evidence="2" type="synonym">fpg</name>
    <name type="ordered locus">GK2728</name>
</gene>
<proteinExistence type="inferred from homology"/>
<name>FPG_GEOKA</name>
<protein>
    <recommendedName>
        <fullName evidence="2">Formamidopyrimidine-DNA glycosylase</fullName>
        <shortName evidence="2">Fapy-DNA glycosylase</shortName>
        <ecNumber evidence="2">3.2.2.23</ecNumber>
    </recommendedName>
    <alternativeName>
        <fullName evidence="2">DNA-(apurinic or apyrimidinic site) lyase MutM</fullName>
        <shortName evidence="2">AP lyase MutM</shortName>
        <ecNumber evidence="2">4.2.99.18</ecNumber>
    </alternativeName>
</protein>
<feature type="initiator methionine" description="Removed" evidence="1">
    <location>
        <position position="1"/>
    </location>
</feature>
<feature type="chain" id="PRO_0000228434" description="Formamidopyrimidine-DNA glycosylase">
    <location>
        <begin position="2"/>
        <end position="274"/>
    </location>
</feature>
<feature type="zinc finger region" description="FPG-type" evidence="2">
    <location>
        <begin position="240"/>
        <end position="274"/>
    </location>
</feature>
<feature type="active site" description="Schiff-base intermediate with DNA" evidence="2">
    <location>
        <position position="2"/>
    </location>
</feature>
<feature type="active site" description="Proton donor" evidence="2">
    <location>
        <position position="3"/>
    </location>
</feature>
<feature type="active site" description="Proton donor; for beta-elimination activity" evidence="2">
    <location>
        <position position="60"/>
    </location>
</feature>
<feature type="active site" description="Proton donor; for delta-elimination activity" evidence="2">
    <location>
        <position position="264"/>
    </location>
</feature>
<feature type="binding site" evidence="2">
    <location>
        <position position="93"/>
    </location>
    <ligand>
        <name>DNA</name>
        <dbReference type="ChEBI" id="CHEBI:16991"/>
    </ligand>
</feature>
<feature type="binding site" evidence="2">
    <location>
        <position position="112"/>
    </location>
    <ligand>
        <name>DNA</name>
        <dbReference type="ChEBI" id="CHEBI:16991"/>
    </ligand>
</feature>
<accession>Q5KWC3</accession>
<evidence type="ECO:0000250" key="1"/>
<evidence type="ECO:0000255" key="2">
    <source>
        <dbReference type="HAMAP-Rule" id="MF_00103"/>
    </source>
</evidence>
<comment type="function">
    <text evidence="2">Involved in base excision repair of DNA damaged by oxidation or by mutagenic agents. Acts as a DNA glycosylase that recognizes and removes damaged bases. Has a preference for oxidized purines, such as 7,8-dihydro-8-oxoguanine (8-oxoG). Has AP (apurinic/apyrimidinic) lyase activity and introduces nicks in the DNA strand. Cleaves the DNA backbone by beta-delta elimination to generate a single-strand break at the site of the removed base with both 3'- and 5'-phosphates.</text>
</comment>
<comment type="catalytic activity">
    <reaction evidence="2">
        <text>Hydrolysis of DNA containing ring-opened 7-methylguanine residues, releasing 2,6-diamino-4-hydroxy-5-(N-methyl)formamidopyrimidine.</text>
        <dbReference type="EC" id="3.2.2.23"/>
    </reaction>
</comment>
<comment type="catalytic activity">
    <reaction evidence="2">
        <text>2'-deoxyribonucleotide-(2'-deoxyribose 5'-phosphate)-2'-deoxyribonucleotide-DNA = a 3'-end 2'-deoxyribonucleotide-(2,3-dehydro-2,3-deoxyribose 5'-phosphate)-DNA + a 5'-end 5'-phospho-2'-deoxyribonucleoside-DNA + H(+)</text>
        <dbReference type="Rhea" id="RHEA:66592"/>
        <dbReference type="Rhea" id="RHEA-COMP:13180"/>
        <dbReference type="Rhea" id="RHEA-COMP:16897"/>
        <dbReference type="Rhea" id="RHEA-COMP:17067"/>
        <dbReference type="ChEBI" id="CHEBI:15378"/>
        <dbReference type="ChEBI" id="CHEBI:136412"/>
        <dbReference type="ChEBI" id="CHEBI:157695"/>
        <dbReference type="ChEBI" id="CHEBI:167181"/>
        <dbReference type="EC" id="4.2.99.18"/>
    </reaction>
</comment>
<comment type="cofactor">
    <cofactor evidence="2">
        <name>Zn(2+)</name>
        <dbReference type="ChEBI" id="CHEBI:29105"/>
    </cofactor>
    <text evidence="2">Binds 1 zinc ion per subunit.</text>
</comment>
<comment type="subunit">
    <text evidence="2">Monomer.</text>
</comment>
<comment type="similarity">
    <text evidence="2">Belongs to the FPG family.</text>
</comment>
<organism>
    <name type="scientific">Geobacillus kaustophilus (strain HTA426)</name>
    <dbReference type="NCBI Taxonomy" id="235909"/>
    <lineage>
        <taxon>Bacteria</taxon>
        <taxon>Bacillati</taxon>
        <taxon>Bacillota</taxon>
        <taxon>Bacilli</taxon>
        <taxon>Bacillales</taxon>
        <taxon>Anoxybacillaceae</taxon>
        <taxon>Geobacillus</taxon>
        <taxon>Geobacillus thermoleovorans group</taxon>
    </lineage>
</organism>
<dbReference type="EC" id="3.2.2.23" evidence="2"/>
<dbReference type="EC" id="4.2.99.18" evidence="2"/>
<dbReference type="EMBL" id="BA000043">
    <property type="protein sequence ID" value="BAD77013.1"/>
    <property type="molecule type" value="Genomic_DNA"/>
</dbReference>
<dbReference type="RefSeq" id="WP_011232202.1">
    <property type="nucleotide sequence ID" value="NC_006510.1"/>
</dbReference>
<dbReference type="SMR" id="Q5KWC3"/>
<dbReference type="STRING" id="235909.GK2728"/>
<dbReference type="KEGG" id="gka:GK2728"/>
<dbReference type="eggNOG" id="COG0266">
    <property type="taxonomic scope" value="Bacteria"/>
</dbReference>
<dbReference type="HOGENOM" id="CLU_038423_1_2_9"/>
<dbReference type="Proteomes" id="UP000001172">
    <property type="component" value="Chromosome"/>
</dbReference>
<dbReference type="GO" id="GO:0034039">
    <property type="term" value="F:8-oxo-7,8-dihydroguanine DNA N-glycosylase activity"/>
    <property type="evidence" value="ECO:0007669"/>
    <property type="project" value="TreeGrafter"/>
</dbReference>
<dbReference type="GO" id="GO:0140078">
    <property type="term" value="F:class I DNA-(apurinic or apyrimidinic site) endonuclease activity"/>
    <property type="evidence" value="ECO:0007669"/>
    <property type="project" value="UniProtKB-EC"/>
</dbReference>
<dbReference type="GO" id="GO:0003684">
    <property type="term" value="F:damaged DNA binding"/>
    <property type="evidence" value="ECO:0007669"/>
    <property type="project" value="InterPro"/>
</dbReference>
<dbReference type="GO" id="GO:0008270">
    <property type="term" value="F:zinc ion binding"/>
    <property type="evidence" value="ECO:0007669"/>
    <property type="project" value="UniProtKB-UniRule"/>
</dbReference>
<dbReference type="GO" id="GO:0006284">
    <property type="term" value="P:base-excision repair"/>
    <property type="evidence" value="ECO:0007669"/>
    <property type="project" value="InterPro"/>
</dbReference>
<dbReference type="CDD" id="cd08966">
    <property type="entry name" value="EcFpg-like_N"/>
    <property type="match status" value="1"/>
</dbReference>
<dbReference type="FunFam" id="1.10.8.50:FF:000003">
    <property type="entry name" value="Formamidopyrimidine-DNA glycosylase"/>
    <property type="match status" value="1"/>
</dbReference>
<dbReference type="Gene3D" id="1.10.8.50">
    <property type="match status" value="1"/>
</dbReference>
<dbReference type="Gene3D" id="3.20.190.10">
    <property type="entry name" value="MutM-like, N-terminal"/>
    <property type="match status" value="1"/>
</dbReference>
<dbReference type="HAMAP" id="MF_00103">
    <property type="entry name" value="Fapy_DNA_glycosyl"/>
    <property type="match status" value="1"/>
</dbReference>
<dbReference type="InterPro" id="IPR015886">
    <property type="entry name" value="DNA_glyclase/AP_lyase_DNA-bd"/>
</dbReference>
<dbReference type="InterPro" id="IPR015887">
    <property type="entry name" value="DNA_glyclase_Znf_dom_DNA_BS"/>
</dbReference>
<dbReference type="InterPro" id="IPR020629">
    <property type="entry name" value="Formamido-pyr_DNA_Glyclase"/>
</dbReference>
<dbReference type="InterPro" id="IPR012319">
    <property type="entry name" value="FPG_cat"/>
</dbReference>
<dbReference type="InterPro" id="IPR035937">
    <property type="entry name" value="MutM-like_N-ter"/>
</dbReference>
<dbReference type="InterPro" id="IPR010979">
    <property type="entry name" value="Ribosomal_uS13-like_H2TH"/>
</dbReference>
<dbReference type="InterPro" id="IPR000214">
    <property type="entry name" value="Znf_DNA_glyclase/AP_lyase"/>
</dbReference>
<dbReference type="InterPro" id="IPR010663">
    <property type="entry name" value="Znf_FPG/IleRS"/>
</dbReference>
<dbReference type="NCBIfam" id="TIGR00577">
    <property type="entry name" value="fpg"/>
    <property type="match status" value="1"/>
</dbReference>
<dbReference type="NCBIfam" id="NF002211">
    <property type="entry name" value="PRK01103.1"/>
    <property type="match status" value="1"/>
</dbReference>
<dbReference type="PANTHER" id="PTHR22993">
    <property type="entry name" value="FORMAMIDOPYRIMIDINE-DNA GLYCOSYLASE"/>
    <property type="match status" value="1"/>
</dbReference>
<dbReference type="PANTHER" id="PTHR22993:SF9">
    <property type="entry name" value="FORMAMIDOPYRIMIDINE-DNA GLYCOSYLASE"/>
    <property type="match status" value="1"/>
</dbReference>
<dbReference type="Pfam" id="PF01149">
    <property type="entry name" value="Fapy_DNA_glyco"/>
    <property type="match status" value="1"/>
</dbReference>
<dbReference type="Pfam" id="PF06831">
    <property type="entry name" value="H2TH"/>
    <property type="match status" value="1"/>
</dbReference>
<dbReference type="Pfam" id="PF06827">
    <property type="entry name" value="zf-FPG_IleRS"/>
    <property type="match status" value="1"/>
</dbReference>
<dbReference type="SMART" id="SM00898">
    <property type="entry name" value="Fapy_DNA_glyco"/>
    <property type="match status" value="1"/>
</dbReference>
<dbReference type="SMART" id="SM01232">
    <property type="entry name" value="H2TH"/>
    <property type="match status" value="1"/>
</dbReference>
<dbReference type="SUPFAM" id="SSF57716">
    <property type="entry name" value="Glucocorticoid receptor-like (DNA-binding domain)"/>
    <property type="match status" value="1"/>
</dbReference>
<dbReference type="SUPFAM" id="SSF81624">
    <property type="entry name" value="N-terminal domain of MutM-like DNA repair proteins"/>
    <property type="match status" value="1"/>
</dbReference>
<dbReference type="SUPFAM" id="SSF46946">
    <property type="entry name" value="S13-like H2TH domain"/>
    <property type="match status" value="1"/>
</dbReference>
<dbReference type="PROSITE" id="PS51068">
    <property type="entry name" value="FPG_CAT"/>
    <property type="match status" value="1"/>
</dbReference>
<dbReference type="PROSITE" id="PS01242">
    <property type="entry name" value="ZF_FPG_1"/>
    <property type="match status" value="1"/>
</dbReference>
<dbReference type="PROSITE" id="PS51066">
    <property type="entry name" value="ZF_FPG_2"/>
    <property type="match status" value="1"/>
</dbReference>
<reference key="1">
    <citation type="journal article" date="2004" name="Nucleic Acids Res.">
        <title>Thermoadaptation trait revealed by the genome sequence of thermophilic Geobacillus kaustophilus.</title>
        <authorList>
            <person name="Takami H."/>
            <person name="Takaki Y."/>
            <person name="Chee G.-J."/>
            <person name="Nishi S."/>
            <person name="Shimamura S."/>
            <person name="Suzuki H."/>
            <person name="Matsui S."/>
            <person name="Uchiyama I."/>
        </authorList>
    </citation>
    <scope>NUCLEOTIDE SEQUENCE [LARGE SCALE GENOMIC DNA]</scope>
    <source>
        <strain>HTA426</strain>
    </source>
</reference>